<protein>
    <recommendedName>
        <fullName evidence="1">Large ribosomal subunit protein bL35</fullName>
    </recommendedName>
    <alternativeName>
        <fullName evidence="2">50S ribosomal protein L35</fullName>
    </alternativeName>
</protein>
<proteinExistence type="inferred from homology"/>
<reference key="1">
    <citation type="journal article" date="2003" name="Nature">
        <title>Genome divergence in two Prochlorococcus ecotypes reflects oceanic niche differentiation.</title>
        <authorList>
            <person name="Rocap G."/>
            <person name="Larimer F.W."/>
            <person name="Lamerdin J.E."/>
            <person name="Malfatti S."/>
            <person name="Chain P."/>
            <person name="Ahlgren N.A."/>
            <person name="Arellano A."/>
            <person name="Coleman M."/>
            <person name="Hauser L."/>
            <person name="Hess W.R."/>
            <person name="Johnson Z.I."/>
            <person name="Land M.L."/>
            <person name="Lindell D."/>
            <person name="Post A.F."/>
            <person name="Regala W."/>
            <person name="Shah M."/>
            <person name="Shaw S.L."/>
            <person name="Steglich C."/>
            <person name="Sullivan M.B."/>
            <person name="Ting C.S."/>
            <person name="Tolonen A."/>
            <person name="Webb E.A."/>
            <person name="Zinser E.R."/>
            <person name="Chisholm S.W."/>
        </authorList>
    </citation>
    <scope>NUCLEOTIDE SEQUENCE [LARGE SCALE GENOMIC DNA]</scope>
    <source>
        <strain>MIT 9313</strain>
    </source>
</reference>
<comment type="similarity">
    <text evidence="1">Belongs to the bacterial ribosomal protein bL35 family.</text>
</comment>
<evidence type="ECO:0000255" key="1">
    <source>
        <dbReference type="HAMAP-Rule" id="MF_00514"/>
    </source>
</evidence>
<evidence type="ECO:0000305" key="2"/>
<name>RL35_PROMM</name>
<dbReference type="EMBL" id="BX548175">
    <property type="protein sequence ID" value="CAE20231.1"/>
    <property type="molecule type" value="Genomic_DNA"/>
</dbReference>
<dbReference type="RefSeq" id="WP_011129435.1">
    <property type="nucleotide sequence ID" value="NC_005071.1"/>
</dbReference>
<dbReference type="SMR" id="Q7V998"/>
<dbReference type="KEGG" id="pmt:PMT_0056"/>
<dbReference type="eggNOG" id="COG0291">
    <property type="taxonomic scope" value="Bacteria"/>
</dbReference>
<dbReference type="HOGENOM" id="CLU_169643_4_0_3"/>
<dbReference type="OrthoDB" id="47476at2"/>
<dbReference type="Proteomes" id="UP000001423">
    <property type="component" value="Chromosome"/>
</dbReference>
<dbReference type="GO" id="GO:0022625">
    <property type="term" value="C:cytosolic large ribosomal subunit"/>
    <property type="evidence" value="ECO:0007669"/>
    <property type="project" value="TreeGrafter"/>
</dbReference>
<dbReference type="GO" id="GO:0003735">
    <property type="term" value="F:structural constituent of ribosome"/>
    <property type="evidence" value="ECO:0007669"/>
    <property type="project" value="InterPro"/>
</dbReference>
<dbReference type="GO" id="GO:0006412">
    <property type="term" value="P:translation"/>
    <property type="evidence" value="ECO:0007669"/>
    <property type="project" value="UniProtKB-UniRule"/>
</dbReference>
<dbReference type="FunFam" id="4.10.410.60:FF:000001">
    <property type="entry name" value="50S ribosomal protein L35"/>
    <property type="match status" value="1"/>
</dbReference>
<dbReference type="Gene3D" id="4.10.410.60">
    <property type="match status" value="1"/>
</dbReference>
<dbReference type="HAMAP" id="MF_00514">
    <property type="entry name" value="Ribosomal_bL35"/>
    <property type="match status" value="1"/>
</dbReference>
<dbReference type="InterPro" id="IPR001706">
    <property type="entry name" value="Ribosomal_bL35"/>
</dbReference>
<dbReference type="InterPro" id="IPR021137">
    <property type="entry name" value="Ribosomal_bL35-like"/>
</dbReference>
<dbReference type="InterPro" id="IPR018265">
    <property type="entry name" value="Ribosomal_bL35_CS"/>
</dbReference>
<dbReference type="InterPro" id="IPR037229">
    <property type="entry name" value="Ribosomal_bL35_sf"/>
</dbReference>
<dbReference type="NCBIfam" id="TIGR00001">
    <property type="entry name" value="rpmI_bact"/>
    <property type="match status" value="1"/>
</dbReference>
<dbReference type="PANTHER" id="PTHR33343">
    <property type="entry name" value="54S RIBOSOMAL PROTEIN BL35M"/>
    <property type="match status" value="1"/>
</dbReference>
<dbReference type="PANTHER" id="PTHR33343:SF1">
    <property type="entry name" value="LARGE RIBOSOMAL SUBUNIT PROTEIN BL35M"/>
    <property type="match status" value="1"/>
</dbReference>
<dbReference type="Pfam" id="PF01632">
    <property type="entry name" value="Ribosomal_L35p"/>
    <property type="match status" value="1"/>
</dbReference>
<dbReference type="PRINTS" id="PR00064">
    <property type="entry name" value="RIBOSOMALL35"/>
</dbReference>
<dbReference type="SUPFAM" id="SSF143034">
    <property type="entry name" value="L35p-like"/>
    <property type="match status" value="1"/>
</dbReference>
<dbReference type="PROSITE" id="PS00936">
    <property type="entry name" value="RIBOSOMAL_L35"/>
    <property type="match status" value="1"/>
</dbReference>
<accession>Q7V998</accession>
<sequence length="65" mass="7615">MPKLKTRKAAAKRFKATVTGKFMRRRAFRNHLLDHKSPKLKRHLATKAVVDERDAENVRLMLPYA</sequence>
<keyword id="KW-1185">Reference proteome</keyword>
<keyword id="KW-0687">Ribonucleoprotein</keyword>
<keyword id="KW-0689">Ribosomal protein</keyword>
<feature type="chain" id="PRO_0000177400" description="Large ribosomal subunit protein bL35">
    <location>
        <begin position="1"/>
        <end position="65"/>
    </location>
</feature>
<gene>
    <name evidence="1" type="primary">rpmI</name>
    <name evidence="1" type="synonym">rpl35</name>
    <name type="ordered locus">PMT_0056</name>
</gene>
<organism>
    <name type="scientific">Prochlorococcus marinus (strain MIT 9313)</name>
    <dbReference type="NCBI Taxonomy" id="74547"/>
    <lineage>
        <taxon>Bacteria</taxon>
        <taxon>Bacillati</taxon>
        <taxon>Cyanobacteriota</taxon>
        <taxon>Cyanophyceae</taxon>
        <taxon>Synechococcales</taxon>
        <taxon>Prochlorococcaceae</taxon>
        <taxon>Prochlorococcus</taxon>
    </lineage>
</organism>